<protein>
    <recommendedName>
        <fullName evidence="1">4-hydroxy-tetrahydrodipicolinate synthase</fullName>
        <shortName evidence="1">HTPA synthase</shortName>
        <ecNumber evidence="1">4.3.3.7</ecNumber>
    </recommendedName>
</protein>
<proteinExistence type="inferred from homology"/>
<name>DAPA_KARMG</name>
<comment type="function">
    <text evidence="1">Catalyzes the condensation of (S)-aspartate-beta-semialdehyde [(S)-ASA] and pyruvate to 4-hydroxy-tetrahydrodipicolinate (HTPA).</text>
</comment>
<comment type="catalytic activity">
    <reaction evidence="1">
        <text>L-aspartate 4-semialdehyde + pyruvate = (2S,4S)-4-hydroxy-2,3,4,5-tetrahydrodipicolinate + H2O + H(+)</text>
        <dbReference type="Rhea" id="RHEA:34171"/>
        <dbReference type="ChEBI" id="CHEBI:15361"/>
        <dbReference type="ChEBI" id="CHEBI:15377"/>
        <dbReference type="ChEBI" id="CHEBI:15378"/>
        <dbReference type="ChEBI" id="CHEBI:67139"/>
        <dbReference type="ChEBI" id="CHEBI:537519"/>
        <dbReference type="EC" id="4.3.3.7"/>
    </reaction>
</comment>
<comment type="pathway">
    <text evidence="1">Amino-acid biosynthesis; L-lysine biosynthesis via DAP pathway; (S)-tetrahydrodipicolinate from L-aspartate: step 3/4.</text>
</comment>
<comment type="subunit">
    <text evidence="1">Homotetramer; dimer of dimers.</text>
</comment>
<comment type="subcellular location">
    <subcellularLocation>
        <location evidence="1">Cytoplasm</location>
    </subcellularLocation>
</comment>
<comment type="similarity">
    <text evidence="1">Belongs to the DapA family.</text>
</comment>
<comment type="caution">
    <text evidence="2">Was originally thought to be a dihydrodipicolinate synthase (DHDPS), catalyzing the condensation of (S)-aspartate-beta-semialdehyde [(S)-ASA] and pyruvate to dihydrodipicolinate (DHDP). However, it was shown in E.coli that the product of the enzymatic reaction is not dihydrodipicolinate but in fact (4S)-4-hydroxy-2,3,4,5-tetrahydro-(2S)-dipicolinic acid (HTPA), and that the consecutive dehydration reaction leading to DHDP is not spontaneous but catalyzed by DapB.</text>
</comment>
<evidence type="ECO:0000255" key="1">
    <source>
        <dbReference type="HAMAP-Rule" id="MF_00418"/>
    </source>
</evidence>
<evidence type="ECO:0000305" key="2"/>
<organism>
    <name type="scientific">Karelsulcia muelleri (strain GWSS)</name>
    <name type="common">Sulcia muelleri</name>
    <dbReference type="NCBI Taxonomy" id="444179"/>
    <lineage>
        <taxon>Bacteria</taxon>
        <taxon>Pseudomonadati</taxon>
        <taxon>Bacteroidota</taxon>
        <taxon>Flavobacteriia</taxon>
        <taxon>Flavobacteriales</taxon>
        <taxon>Candidatus Karelsulcia</taxon>
    </lineage>
</organism>
<reference key="1">
    <citation type="journal article" date="2007" name="Proc. Natl. Acad. Sci. U.S.A.">
        <title>Parallel genomic evolution and metabolic interdependence in an ancient symbiosis.</title>
        <authorList>
            <person name="McCutcheon J.P."/>
            <person name="Moran N.A."/>
        </authorList>
    </citation>
    <scope>NUCLEOTIDE SEQUENCE [LARGE SCALE GENOMIC DNA]</scope>
    <source>
        <strain>GWSS</strain>
    </source>
</reference>
<keyword id="KW-0028">Amino-acid biosynthesis</keyword>
<keyword id="KW-0963">Cytoplasm</keyword>
<keyword id="KW-0220">Diaminopimelate biosynthesis</keyword>
<keyword id="KW-0456">Lyase</keyword>
<keyword id="KW-0457">Lysine biosynthesis</keyword>
<keyword id="KW-0704">Schiff base</keyword>
<feature type="chain" id="PRO_0000340988" description="4-hydroxy-tetrahydrodipicolinate synthase">
    <location>
        <begin position="1"/>
        <end position="296"/>
    </location>
</feature>
<feature type="active site" description="Proton donor/acceptor" evidence="1">
    <location>
        <position position="135"/>
    </location>
</feature>
<feature type="active site" description="Schiff-base intermediate with substrate" evidence="1">
    <location>
        <position position="164"/>
    </location>
</feature>
<feature type="binding site" evidence="1">
    <location>
        <position position="47"/>
    </location>
    <ligand>
        <name>pyruvate</name>
        <dbReference type="ChEBI" id="CHEBI:15361"/>
    </ligand>
</feature>
<feature type="binding site" evidence="1">
    <location>
        <position position="207"/>
    </location>
    <ligand>
        <name>pyruvate</name>
        <dbReference type="ChEBI" id="CHEBI:15361"/>
    </ligand>
</feature>
<feature type="site" description="Part of a proton relay during catalysis" evidence="1">
    <location>
        <position position="46"/>
    </location>
</feature>
<feature type="site" description="Part of a proton relay during catalysis" evidence="1">
    <location>
        <position position="109"/>
    </location>
</feature>
<dbReference type="EC" id="4.3.3.7" evidence="1"/>
<dbReference type="EMBL" id="CP000770">
    <property type="protein sequence ID" value="ABS30575.1"/>
    <property type="molecule type" value="Genomic_DNA"/>
</dbReference>
<dbReference type="SMR" id="A8Z624"/>
<dbReference type="STRING" id="444179.SMGWSS_174"/>
<dbReference type="KEGG" id="smg:SMGWSS_174"/>
<dbReference type="HOGENOM" id="CLU_049343_7_1_10"/>
<dbReference type="UniPathway" id="UPA00034">
    <property type="reaction ID" value="UER00017"/>
</dbReference>
<dbReference type="Proteomes" id="UP000000781">
    <property type="component" value="Chromosome"/>
</dbReference>
<dbReference type="GO" id="GO:0005829">
    <property type="term" value="C:cytosol"/>
    <property type="evidence" value="ECO:0007669"/>
    <property type="project" value="TreeGrafter"/>
</dbReference>
<dbReference type="GO" id="GO:0008840">
    <property type="term" value="F:4-hydroxy-tetrahydrodipicolinate synthase activity"/>
    <property type="evidence" value="ECO:0007669"/>
    <property type="project" value="UniProtKB-UniRule"/>
</dbReference>
<dbReference type="GO" id="GO:0019877">
    <property type="term" value="P:diaminopimelate biosynthetic process"/>
    <property type="evidence" value="ECO:0007669"/>
    <property type="project" value="UniProtKB-UniRule"/>
</dbReference>
<dbReference type="GO" id="GO:0009089">
    <property type="term" value="P:lysine biosynthetic process via diaminopimelate"/>
    <property type="evidence" value="ECO:0007669"/>
    <property type="project" value="UniProtKB-UniRule"/>
</dbReference>
<dbReference type="CDD" id="cd00950">
    <property type="entry name" value="DHDPS"/>
    <property type="match status" value="1"/>
</dbReference>
<dbReference type="Gene3D" id="3.20.20.70">
    <property type="entry name" value="Aldolase class I"/>
    <property type="match status" value="1"/>
</dbReference>
<dbReference type="HAMAP" id="MF_00418">
    <property type="entry name" value="DapA"/>
    <property type="match status" value="1"/>
</dbReference>
<dbReference type="InterPro" id="IPR013785">
    <property type="entry name" value="Aldolase_TIM"/>
</dbReference>
<dbReference type="InterPro" id="IPR005263">
    <property type="entry name" value="DapA"/>
</dbReference>
<dbReference type="InterPro" id="IPR002220">
    <property type="entry name" value="DapA-like"/>
</dbReference>
<dbReference type="InterPro" id="IPR020625">
    <property type="entry name" value="Schiff_base-form_aldolases_AS"/>
</dbReference>
<dbReference type="NCBIfam" id="TIGR00674">
    <property type="entry name" value="dapA"/>
    <property type="match status" value="1"/>
</dbReference>
<dbReference type="PANTHER" id="PTHR12128:SF66">
    <property type="entry name" value="4-HYDROXY-2-OXOGLUTARATE ALDOLASE, MITOCHONDRIAL"/>
    <property type="match status" value="1"/>
</dbReference>
<dbReference type="PANTHER" id="PTHR12128">
    <property type="entry name" value="DIHYDRODIPICOLINATE SYNTHASE"/>
    <property type="match status" value="1"/>
</dbReference>
<dbReference type="Pfam" id="PF00701">
    <property type="entry name" value="DHDPS"/>
    <property type="match status" value="1"/>
</dbReference>
<dbReference type="PIRSF" id="PIRSF001365">
    <property type="entry name" value="DHDPS"/>
    <property type="match status" value="1"/>
</dbReference>
<dbReference type="PRINTS" id="PR00146">
    <property type="entry name" value="DHPICSNTHASE"/>
</dbReference>
<dbReference type="SMART" id="SM01130">
    <property type="entry name" value="DHDPS"/>
    <property type="match status" value="1"/>
</dbReference>
<dbReference type="SUPFAM" id="SSF51569">
    <property type="entry name" value="Aldolase"/>
    <property type="match status" value="1"/>
</dbReference>
<dbReference type="PROSITE" id="PS00666">
    <property type="entry name" value="DHDPS_2"/>
    <property type="match status" value="1"/>
</dbReference>
<accession>A8Z624</accession>
<sequence>MKNINGIGIALVTPFNKKGEIDFISLEKIVSYVINEGVQYLVLLGTTGETPTLKLKEKIDIINCVKNISQNRIPIVLGMGSNNTEDVLLTLKLIKLDNFEAILSVCPYYNKPSQEGIYNHFKTISENTDMKIIIYNVPHRTGTNINLDTINRLINNRDNIIGIKEASGNIIQSYNFIKHKIKKDFLVFSGDDTIGLPIVLGGGDGIISVIGQAFPKELDFIYKFAYKNQVNKAYKLYYKIFKILNLVFKEGNPSGIKTLLKIKGLCNKYVRLPLLKGSKTLEKKLYIEYNNMLKTQ</sequence>
<gene>
    <name evidence="1" type="primary">dapA</name>
    <name type="ordered locus">SMGWSS_174</name>
</gene>